<reference key="1">
    <citation type="journal article" date="1998" name="Science">
        <title>Genome sequence of the nematode C. elegans: a platform for investigating biology.</title>
        <authorList>
            <consortium name="The C. elegans sequencing consortium"/>
        </authorList>
    </citation>
    <scope>NUCLEOTIDE SEQUENCE [LARGE SCALE GENOMIC DNA]</scope>
    <source>
        <strain>Bristol N2</strain>
    </source>
</reference>
<proteinExistence type="predicted"/>
<keyword id="KW-1185">Reference proteome</keyword>
<feature type="chain" id="PRO_0000065472" description="Uncharacterized protein T19H5.4">
    <location>
        <begin position="1"/>
        <end position="178"/>
    </location>
</feature>
<feature type="region of interest" description="Disordered" evidence="1">
    <location>
        <begin position="1"/>
        <end position="24"/>
    </location>
</feature>
<feature type="region of interest" description="Disordered" evidence="1">
    <location>
        <begin position="47"/>
        <end position="114"/>
    </location>
</feature>
<feature type="compositionally biased region" description="Polar residues" evidence="1">
    <location>
        <begin position="1"/>
        <end position="13"/>
    </location>
</feature>
<gene>
    <name evidence="2" type="ORF">T19H5.4</name>
</gene>
<accession>Q09356</accession>
<accession>B7WN70</accession>
<organism>
    <name type="scientific">Caenorhabditis elegans</name>
    <dbReference type="NCBI Taxonomy" id="6239"/>
    <lineage>
        <taxon>Eukaryota</taxon>
        <taxon>Metazoa</taxon>
        <taxon>Ecdysozoa</taxon>
        <taxon>Nematoda</taxon>
        <taxon>Chromadorea</taxon>
        <taxon>Rhabditida</taxon>
        <taxon>Rhabditina</taxon>
        <taxon>Rhabditomorpha</taxon>
        <taxon>Rhabditoidea</taxon>
        <taxon>Rhabditidae</taxon>
        <taxon>Peloderinae</taxon>
        <taxon>Caenorhabditis</taxon>
    </lineage>
</organism>
<sequence length="178" mass="20090">MEVASSSSACQFDNLNNNNNELKPVRPKRDFRFKVIEVQNGPKWFVWPSRNRGSSEDVDENDNKKVSQPQNNGFGALRRSVIRQSKRKQDQDAIAARTASEPASARRLSAKKEKAVTEPLNQVSSMFKIISIEKNWESFDATDNEDNDEDLEDGARTVSVISLTSVIEGGERRWTTSI</sequence>
<evidence type="ECO:0000256" key="1">
    <source>
        <dbReference type="SAM" id="MobiDB-lite"/>
    </source>
</evidence>
<evidence type="ECO:0000312" key="2">
    <source>
        <dbReference type="WormBase" id="T19H5.4"/>
    </source>
</evidence>
<dbReference type="EMBL" id="BX284602">
    <property type="protein sequence ID" value="CAT01057.1"/>
    <property type="molecule type" value="Genomic_DNA"/>
</dbReference>
<dbReference type="PIR" id="T25013">
    <property type="entry name" value="T25013"/>
</dbReference>
<dbReference type="RefSeq" id="NP_001254215.1">
    <property type="nucleotide sequence ID" value="NM_001267286.5"/>
</dbReference>
<dbReference type="SMR" id="Q09356"/>
<dbReference type="BioGRID" id="39826">
    <property type="interactions" value="2"/>
</dbReference>
<dbReference type="FunCoup" id="Q09356">
    <property type="interactions" value="206"/>
</dbReference>
<dbReference type="PaxDb" id="6239-T19H5.4a"/>
<dbReference type="EnsemblMetazoa" id="T19H5.4.1">
    <property type="protein sequence ID" value="T19H5.4.1"/>
    <property type="gene ID" value="WBGene00011849"/>
</dbReference>
<dbReference type="GeneID" id="174503"/>
<dbReference type="KEGG" id="cel:CELE_T19H5.4"/>
<dbReference type="UCSC" id="T19H5.4">
    <property type="organism name" value="c. elegans"/>
</dbReference>
<dbReference type="AGR" id="WB:WBGene00011849"/>
<dbReference type="CTD" id="174503"/>
<dbReference type="WormBase" id="T19H5.4">
    <property type="protein sequence ID" value="CE43368"/>
    <property type="gene ID" value="WBGene00011849"/>
</dbReference>
<dbReference type="eggNOG" id="ENOG502T25N">
    <property type="taxonomic scope" value="Eukaryota"/>
</dbReference>
<dbReference type="HOGENOM" id="CLU_889154_0_0_1"/>
<dbReference type="InParanoid" id="Q09356"/>
<dbReference type="OrthoDB" id="5806033at2759"/>
<dbReference type="PRO" id="PR:Q09356"/>
<dbReference type="Proteomes" id="UP000001940">
    <property type="component" value="Chromosome II"/>
</dbReference>
<dbReference type="Bgee" id="WBGene00011849">
    <property type="expression patterns" value="Expressed in pharyngeal muscle cell (C elegans) and 4 other cell types or tissues"/>
</dbReference>
<name>YRZ4_CAEEL</name>
<protein>
    <recommendedName>
        <fullName>Uncharacterized protein T19H5.4</fullName>
    </recommendedName>
</protein>